<accession>Q92575</accession>
<accession>A8K9W4</accession>
<accession>Q4ZG56</accession>
<accession>Q8IYM5</accession>
<gene>
    <name type="primary">UBXN4</name>
    <name type="synonym">KIAA0242</name>
    <name type="synonym">UBXD2</name>
    <name type="synonym">UBXDC1</name>
</gene>
<protein>
    <recommendedName>
        <fullName>UBX domain-containing protein 4</fullName>
    </recommendedName>
    <alternativeName>
        <fullName>Erasin</fullName>
    </alternativeName>
    <alternativeName>
        <fullName>UBX domain-containing protein 2</fullName>
    </alternativeName>
</protein>
<organism>
    <name type="scientific">Homo sapiens</name>
    <name type="common">Human</name>
    <dbReference type="NCBI Taxonomy" id="9606"/>
    <lineage>
        <taxon>Eukaryota</taxon>
        <taxon>Metazoa</taxon>
        <taxon>Chordata</taxon>
        <taxon>Craniata</taxon>
        <taxon>Vertebrata</taxon>
        <taxon>Euteleostomi</taxon>
        <taxon>Mammalia</taxon>
        <taxon>Eutheria</taxon>
        <taxon>Euarchontoglires</taxon>
        <taxon>Primates</taxon>
        <taxon>Haplorrhini</taxon>
        <taxon>Catarrhini</taxon>
        <taxon>Hominidae</taxon>
        <taxon>Homo</taxon>
    </lineage>
</organism>
<dbReference type="EMBL" id="AK292829">
    <property type="protein sequence ID" value="BAF85518.1"/>
    <property type="molecule type" value="mRNA"/>
</dbReference>
<dbReference type="EMBL" id="EF199840">
    <property type="protein sequence ID" value="ABM90426.1"/>
    <property type="molecule type" value="mRNA"/>
</dbReference>
<dbReference type="EMBL" id="D87684">
    <property type="protein sequence ID" value="BAA13437.1"/>
    <property type="status" value="ALT_INIT"/>
    <property type="molecule type" value="mRNA"/>
</dbReference>
<dbReference type="EMBL" id="BX647662">
    <property type="status" value="NOT_ANNOTATED_CDS"/>
    <property type="molecule type" value="mRNA"/>
</dbReference>
<dbReference type="EMBL" id="AC011893">
    <property type="protein sequence ID" value="AAX88923.1"/>
    <property type="molecule type" value="Genomic_DNA"/>
</dbReference>
<dbReference type="EMBL" id="CH471058">
    <property type="protein sequence ID" value="EAX11623.1"/>
    <property type="molecule type" value="Genomic_DNA"/>
</dbReference>
<dbReference type="EMBL" id="BC035594">
    <property type="protein sequence ID" value="AAH35594.1"/>
    <property type="molecule type" value="mRNA"/>
</dbReference>
<dbReference type="CCDS" id="CCDS42761.1"/>
<dbReference type="RefSeq" id="NP_055422.1">
    <property type="nucleotide sequence ID" value="NM_014607.4"/>
</dbReference>
<dbReference type="PDB" id="2KXJ">
    <property type="method" value="NMR"/>
    <property type="chains" value="A=317-397"/>
</dbReference>
<dbReference type="PDBsum" id="2KXJ"/>
<dbReference type="SMR" id="Q92575"/>
<dbReference type="BioGRID" id="116799">
    <property type="interactions" value="200"/>
</dbReference>
<dbReference type="CORUM" id="Q92575"/>
<dbReference type="FunCoup" id="Q92575">
    <property type="interactions" value="3263"/>
</dbReference>
<dbReference type="IntAct" id="Q92575">
    <property type="interactions" value="52"/>
</dbReference>
<dbReference type="MINT" id="Q92575"/>
<dbReference type="STRING" id="9606.ENSP00000272638"/>
<dbReference type="GlyGen" id="Q92575">
    <property type="glycosylation" value="3 sites, 1 N-linked glycan (1 site), 1 O-linked glycan (1 site)"/>
</dbReference>
<dbReference type="iPTMnet" id="Q92575"/>
<dbReference type="PhosphoSitePlus" id="Q92575"/>
<dbReference type="SwissPalm" id="Q92575"/>
<dbReference type="BioMuta" id="UBXN4"/>
<dbReference type="DMDM" id="30913402"/>
<dbReference type="jPOST" id="Q92575"/>
<dbReference type="MassIVE" id="Q92575"/>
<dbReference type="PaxDb" id="9606-ENSP00000272638"/>
<dbReference type="PeptideAtlas" id="Q92575"/>
<dbReference type="ProteomicsDB" id="75336"/>
<dbReference type="Pumba" id="Q92575"/>
<dbReference type="Antibodypedia" id="33579">
    <property type="antibodies" value="96 antibodies from 24 providers"/>
</dbReference>
<dbReference type="DNASU" id="23190"/>
<dbReference type="Ensembl" id="ENST00000272638.14">
    <property type="protein sequence ID" value="ENSP00000272638.9"/>
    <property type="gene ID" value="ENSG00000144224.17"/>
</dbReference>
<dbReference type="GeneID" id="23190"/>
<dbReference type="KEGG" id="hsa:23190"/>
<dbReference type="MANE-Select" id="ENST00000272638.14">
    <property type="protein sequence ID" value="ENSP00000272638.9"/>
    <property type="RefSeq nucleotide sequence ID" value="NM_014607.4"/>
    <property type="RefSeq protein sequence ID" value="NP_055422.1"/>
</dbReference>
<dbReference type="UCSC" id="uc002tur.4">
    <property type="organism name" value="human"/>
</dbReference>
<dbReference type="AGR" id="HGNC:14860"/>
<dbReference type="CTD" id="23190"/>
<dbReference type="DisGeNET" id="23190"/>
<dbReference type="GeneCards" id="UBXN4"/>
<dbReference type="HGNC" id="HGNC:14860">
    <property type="gene designation" value="UBXN4"/>
</dbReference>
<dbReference type="HPA" id="ENSG00000144224">
    <property type="expression patterns" value="Low tissue specificity"/>
</dbReference>
<dbReference type="MIM" id="611216">
    <property type="type" value="gene"/>
</dbReference>
<dbReference type="neXtProt" id="NX_Q92575"/>
<dbReference type="OpenTargets" id="ENSG00000144224"/>
<dbReference type="PharmGKB" id="PA37912"/>
<dbReference type="VEuPathDB" id="HostDB:ENSG00000144224"/>
<dbReference type="eggNOG" id="KOG2507">
    <property type="taxonomic scope" value="Eukaryota"/>
</dbReference>
<dbReference type="GeneTree" id="ENSGT00940000160205"/>
<dbReference type="HOGENOM" id="CLU_039222_1_1_1"/>
<dbReference type="InParanoid" id="Q92575"/>
<dbReference type="OMA" id="FEPNNTS"/>
<dbReference type="OrthoDB" id="2445133at2759"/>
<dbReference type="PAN-GO" id="Q92575">
    <property type="GO annotations" value="2 GO annotations based on evolutionary models"/>
</dbReference>
<dbReference type="PhylomeDB" id="Q92575"/>
<dbReference type="TreeFam" id="TF317466"/>
<dbReference type="PathwayCommons" id="Q92575"/>
<dbReference type="SignaLink" id="Q92575"/>
<dbReference type="BioGRID-ORCS" id="23190">
    <property type="hits" value="204 hits in 1161 CRISPR screens"/>
</dbReference>
<dbReference type="CD-CODE" id="DEE660B4">
    <property type="entry name" value="Stress granule"/>
</dbReference>
<dbReference type="ChiTaRS" id="UBXN4">
    <property type="organism name" value="human"/>
</dbReference>
<dbReference type="EvolutionaryTrace" id="Q92575"/>
<dbReference type="GeneWiki" id="UBXD2"/>
<dbReference type="GenomeRNAi" id="23190"/>
<dbReference type="Pharos" id="Q92575">
    <property type="development level" value="Tbio"/>
</dbReference>
<dbReference type="PRO" id="PR:Q92575"/>
<dbReference type="Proteomes" id="UP000005640">
    <property type="component" value="Chromosome 2"/>
</dbReference>
<dbReference type="RNAct" id="Q92575">
    <property type="molecule type" value="protein"/>
</dbReference>
<dbReference type="Bgee" id="ENSG00000144224">
    <property type="expression patterns" value="Expressed in sperm and 210 other cell types or tissues"/>
</dbReference>
<dbReference type="ExpressionAtlas" id="Q92575">
    <property type="expression patterns" value="baseline and differential"/>
</dbReference>
<dbReference type="GO" id="GO:0005829">
    <property type="term" value="C:cytosol"/>
    <property type="evidence" value="ECO:0000314"/>
    <property type="project" value="HPA"/>
</dbReference>
<dbReference type="GO" id="GO:0005783">
    <property type="term" value="C:endoplasmic reticulum"/>
    <property type="evidence" value="ECO:0000314"/>
    <property type="project" value="HPA"/>
</dbReference>
<dbReference type="GO" id="GO:0005789">
    <property type="term" value="C:endoplasmic reticulum membrane"/>
    <property type="evidence" value="ECO:0007669"/>
    <property type="project" value="UniProtKB-SubCell"/>
</dbReference>
<dbReference type="GO" id="GO:0005635">
    <property type="term" value="C:nuclear envelope"/>
    <property type="evidence" value="ECO:0007669"/>
    <property type="project" value="UniProtKB-SubCell"/>
</dbReference>
<dbReference type="GO" id="GO:0036503">
    <property type="term" value="P:ERAD pathway"/>
    <property type="evidence" value="ECO:0000315"/>
    <property type="project" value="UniProtKB"/>
</dbReference>
<dbReference type="GO" id="GO:0006986">
    <property type="term" value="P:response to unfolded protein"/>
    <property type="evidence" value="ECO:0007669"/>
    <property type="project" value="UniProtKB-KW"/>
</dbReference>
<dbReference type="CDD" id="cd16117">
    <property type="entry name" value="UBX_UBXN4"/>
    <property type="match status" value="1"/>
</dbReference>
<dbReference type="FunFam" id="3.10.20.90:FF:000196">
    <property type="entry name" value="UBX domain-containing protein 4"/>
    <property type="match status" value="1"/>
</dbReference>
<dbReference type="FunFam" id="3.40.30.10:FF:000163">
    <property type="entry name" value="UBX domain-containing protein 4"/>
    <property type="match status" value="1"/>
</dbReference>
<dbReference type="Gene3D" id="3.40.30.10">
    <property type="entry name" value="Glutaredoxin"/>
    <property type="match status" value="1"/>
</dbReference>
<dbReference type="Gene3D" id="3.10.20.90">
    <property type="entry name" value="Phosphatidylinositol 3-kinase Catalytic Subunit, Chain A, domain 1"/>
    <property type="match status" value="1"/>
</dbReference>
<dbReference type="InterPro" id="IPR036249">
    <property type="entry name" value="Thioredoxin-like_sf"/>
</dbReference>
<dbReference type="InterPro" id="IPR029071">
    <property type="entry name" value="Ubiquitin-like_domsf"/>
</dbReference>
<dbReference type="InterPro" id="IPR001012">
    <property type="entry name" value="UBX_dom"/>
</dbReference>
<dbReference type="PANTHER" id="PTHR46424">
    <property type="entry name" value="UBX DOMAIN-CONTAINING PROTEIN 4"/>
    <property type="match status" value="1"/>
</dbReference>
<dbReference type="PANTHER" id="PTHR46424:SF1">
    <property type="entry name" value="UBX DOMAIN-CONTAINING PROTEIN 4"/>
    <property type="match status" value="1"/>
</dbReference>
<dbReference type="Pfam" id="PF00789">
    <property type="entry name" value="UBX"/>
    <property type="match status" value="1"/>
</dbReference>
<dbReference type="Pfam" id="PF23187">
    <property type="entry name" value="UBX7_N"/>
    <property type="match status" value="1"/>
</dbReference>
<dbReference type="SMART" id="SM00166">
    <property type="entry name" value="UBX"/>
    <property type="match status" value="1"/>
</dbReference>
<dbReference type="SUPFAM" id="SSF52833">
    <property type="entry name" value="Thioredoxin-like"/>
    <property type="match status" value="1"/>
</dbReference>
<dbReference type="SUPFAM" id="SSF54236">
    <property type="entry name" value="Ubiquitin-like"/>
    <property type="match status" value="1"/>
</dbReference>
<dbReference type="PROSITE" id="PS50033">
    <property type="entry name" value="UBX"/>
    <property type="match status" value="1"/>
</dbReference>
<evidence type="ECO:0000255" key="1"/>
<evidence type="ECO:0000255" key="2">
    <source>
        <dbReference type="PROSITE-ProRule" id="PRU00215"/>
    </source>
</evidence>
<evidence type="ECO:0000256" key="3">
    <source>
        <dbReference type="SAM" id="MobiDB-lite"/>
    </source>
</evidence>
<evidence type="ECO:0000269" key="4">
    <source>
    </source>
</evidence>
<evidence type="ECO:0000269" key="5">
    <source>
    </source>
</evidence>
<evidence type="ECO:0000305" key="6"/>
<evidence type="ECO:0007744" key="7">
    <source>
    </source>
</evidence>
<evidence type="ECO:0007744" key="8">
    <source>
    </source>
</evidence>
<evidence type="ECO:0007829" key="9">
    <source>
        <dbReference type="PDB" id="2KXJ"/>
    </source>
</evidence>
<name>UBXN4_HUMAN</name>
<comment type="function">
    <text evidence="4 5">Involved in endoplasmic reticulum-associated protein degradation (ERAD). Acts as a platform to recruit both UBQLN1 and VCP to the ER during ERAD (PubMed:19822669).</text>
</comment>
<comment type="subunit">
    <text evidence="4 5">Directly interacts with VCP. Interacts with UBQLN1. Forms a complex with VCP and UBQLN1.</text>
</comment>
<comment type="interaction">
    <interactant intactId="EBI-723441">
        <id>Q92575</id>
    </interactant>
    <interactant intactId="EBI-10220715">
        <id>P63211</id>
        <label>GNGT1</label>
    </interactant>
    <organismsDiffer>false</organismsDiffer>
    <experiments>3</experiments>
</comment>
<comment type="interaction">
    <interactant intactId="EBI-723441">
        <id>Q92575</id>
    </interactant>
    <interactant intactId="EBI-1048119">
        <id>Q14139</id>
        <label>UBE4A</label>
    </interactant>
    <organismsDiffer>false</organismsDiffer>
    <experiments>4</experiments>
</comment>
<comment type="interaction">
    <interactant intactId="EBI-723441">
        <id>Q92575</id>
    </interactant>
    <interactant intactId="EBI-741480">
        <id>Q9UMX0</id>
        <label>UBQLN1</label>
    </interactant>
    <organismsDiffer>false</organismsDiffer>
    <experiments>6</experiments>
</comment>
<comment type="interaction">
    <interactant intactId="EBI-723441">
        <id>Q92575</id>
    </interactant>
    <interactant intactId="EBI-10173939">
        <id>Q9UMX0-2</id>
        <label>UBQLN1</label>
    </interactant>
    <organismsDiffer>false</organismsDiffer>
    <experiments>3</experiments>
</comment>
<comment type="interaction">
    <interactant intactId="EBI-723441">
        <id>Q92575</id>
    </interactant>
    <interactant intactId="EBI-355164">
        <id>P55072</id>
        <label>VCP</label>
    </interactant>
    <organismsDiffer>false</organismsDiffer>
    <experiments>12</experiments>
</comment>
<comment type="subcellular location">
    <subcellularLocation>
        <location evidence="4">Endoplasmic reticulum membrane</location>
        <topology evidence="4">Peripheral membrane protein</topology>
    </subcellularLocation>
    <subcellularLocation>
        <location evidence="4">Nucleus envelope</location>
    </subcellularLocation>
    <text evidence="4">Both the N- and the C-terminus face the cytosol. Also found in the nucleus envelope contiguous to the ER.</text>
</comment>
<comment type="tissue specificity">
    <text evidence="4">Expressed in many tissues, including heart, brain, placenta, lung, liver, skeletal muscle, kidney and pancreas. Accumulates in Alzheimer disease-afflicted brains (at protein level).</text>
</comment>
<comment type="induction">
    <text evidence="4">By ER stress-inducing agents such as tunicamycin, thapsigargin, DTT and the calcium ionophore A23187 (at protein level).</text>
</comment>
<comment type="domain">
    <text evidence="4">The UBX domain is required for interaction with VCP.</text>
</comment>
<comment type="domain">
    <text evidence="4">The intramembrane domain also contains the signal for ER targeting.</text>
</comment>
<comment type="sequence caution" evidence="6">
    <conflict type="erroneous initiation">
        <sequence resource="EMBL-CDS" id="BAA13437"/>
    </conflict>
    <text>Extended N-terminus.</text>
</comment>
<sequence>MLWFQGAIPAAIATAKRSGAVFVVFVAGDDEQSTQMAASWEDDKVTEASSNSFVAIKIDTKSEACLQFSQIYPVVCVPSSFFIGDSGIPLEVIAGSVSADELVTRIHKVRQMHLLKSETSVANGSQSESSVSTPSASFEPNNTCENSQSRNAELCEIPPTSDTKSDTATGGESAGHATSSQEPSGCSDQRPAEDLNIRVERLTKKLEERREEKRKEEEQREIKKEIERRKTGKEMLDYKRKQEEELTKRMLEERNREKAEDRAARERIKQQIALDRAERAARFAKTKEEVEAAKAAALLAKQAEMEVKRESYARERSTVARIQFRLPDGSSFTNQFPSDAPLEEARQFAAQTVGNTYGNFSLATMFPRREFTKEDYKKKLLDLELAPSASVVLLPAGRPTASIVHSSSGDIWTLLGTVLYPFLAIWRLISNFLFSNPPPTQTSVRVTSSEPPNPASSSKSEKREPVRKRVLEKRGDDFKKEGKIYRLRTQDDGEDENNTWNGNSTQQM</sequence>
<feature type="chain" id="PRO_0000211027" description="UBX domain-containing protein 4">
    <location>
        <begin position="1"/>
        <end position="508"/>
    </location>
</feature>
<feature type="topological domain" description="Cytoplasmic" evidence="1">
    <location>
        <begin position="1"/>
        <end position="413"/>
    </location>
</feature>
<feature type="intramembrane region" evidence="1">
    <location>
        <begin position="414"/>
        <end position="434"/>
    </location>
</feature>
<feature type="topological domain" description="Cytoplasmic" evidence="1">
    <location>
        <begin position="435"/>
        <end position="508"/>
    </location>
</feature>
<feature type="domain" description="UBX" evidence="2">
    <location>
        <begin position="315"/>
        <end position="393"/>
    </location>
</feature>
<feature type="region of interest" description="Interaction with UBQLN1" evidence="5">
    <location>
        <begin position="1"/>
        <end position="200"/>
    </location>
</feature>
<feature type="region of interest" description="Disordered" evidence="3">
    <location>
        <begin position="117"/>
        <end position="196"/>
    </location>
</feature>
<feature type="region of interest" description="Disordered" evidence="3">
    <location>
        <begin position="440"/>
        <end position="508"/>
    </location>
</feature>
<feature type="compositionally biased region" description="Polar residues" evidence="3">
    <location>
        <begin position="117"/>
        <end position="151"/>
    </location>
</feature>
<feature type="compositionally biased region" description="Polar residues" evidence="3">
    <location>
        <begin position="160"/>
        <end position="187"/>
    </location>
</feature>
<feature type="compositionally biased region" description="Polar residues" evidence="3">
    <location>
        <begin position="441"/>
        <end position="458"/>
    </location>
</feature>
<feature type="compositionally biased region" description="Basic and acidic residues" evidence="3">
    <location>
        <begin position="459"/>
        <end position="491"/>
    </location>
</feature>
<feature type="compositionally biased region" description="Polar residues" evidence="3">
    <location>
        <begin position="498"/>
        <end position="508"/>
    </location>
</feature>
<feature type="modified residue" description="Phosphothreonine" evidence="7 8">
    <location>
        <position position="489"/>
    </location>
</feature>
<feature type="sequence variant" id="VAR_052686" description="In dbSNP:rs2304602.">
    <original>S</original>
    <variation>R</variation>
    <location>
        <position position="458"/>
    </location>
</feature>
<feature type="strand" evidence="9">
    <location>
        <begin position="318"/>
        <end position="325"/>
    </location>
</feature>
<feature type="strand" evidence="9">
    <location>
        <begin position="331"/>
        <end position="341"/>
    </location>
</feature>
<feature type="helix" evidence="9">
    <location>
        <begin position="343"/>
        <end position="353"/>
    </location>
</feature>
<feature type="strand" evidence="9">
    <location>
        <begin position="354"/>
        <end position="357"/>
    </location>
</feature>
<feature type="strand" evidence="9">
    <location>
        <begin position="362"/>
        <end position="367"/>
    </location>
</feature>
<feature type="helix" evidence="9">
    <location>
        <begin position="373"/>
        <end position="377"/>
    </location>
</feature>
<feature type="strand" evidence="9">
    <location>
        <begin position="378"/>
        <end position="380"/>
    </location>
</feature>
<feature type="helix" evidence="9">
    <location>
        <begin position="381"/>
        <end position="383"/>
    </location>
</feature>
<feature type="strand" evidence="9">
    <location>
        <begin position="389"/>
        <end position="393"/>
    </location>
</feature>
<keyword id="KW-0002">3D-structure</keyword>
<keyword id="KW-0256">Endoplasmic reticulum</keyword>
<keyword id="KW-0472">Membrane</keyword>
<keyword id="KW-0539">Nucleus</keyword>
<keyword id="KW-0597">Phosphoprotein</keyword>
<keyword id="KW-1267">Proteomics identification</keyword>
<keyword id="KW-1185">Reference proteome</keyword>
<keyword id="KW-0834">Unfolded protein response</keyword>
<reference key="1">
    <citation type="journal article" date="2004" name="Nat. Genet.">
        <title>Complete sequencing and characterization of 21,243 full-length human cDNAs.</title>
        <authorList>
            <person name="Ota T."/>
            <person name="Suzuki Y."/>
            <person name="Nishikawa T."/>
            <person name="Otsuki T."/>
            <person name="Sugiyama T."/>
            <person name="Irie R."/>
            <person name="Wakamatsu A."/>
            <person name="Hayashi K."/>
            <person name="Sato H."/>
            <person name="Nagai K."/>
            <person name="Kimura K."/>
            <person name="Makita H."/>
            <person name="Sekine M."/>
            <person name="Obayashi M."/>
            <person name="Nishi T."/>
            <person name="Shibahara T."/>
            <person name="Tanaka T."/>
            <person name="Ishii S."/>
            <person name="Yamamoto J."/>
            <person name="Saito K."/>
            <person name="Kawai Y."/>
            <person name="Isono Y."/>
            <person name="Nakamura Y."/>
            <person name="Nagahari K."/>
            <person name="Murakami K."/>
            <person name="Yasuda T."/>
            <person name="Iwayanagi T."/>
            <person name="Wagatsuma M."/>
            <person name="Shiratori A."/>
            <person name="Sudo H."/>
            <person name="Hosoiri T."/>
            <person name="Kaku Y."/>
            <person name="Kodaira H."/>
            <person name="Kondo H."/>
            <person name="Sugawara M."/>
            <person name="Takahashi M."/>
            <person name="Kanda K."/>
            <person name="Yokoi T."/>
            <person name="Furuya T."/>
            <person name="Kikkawa E."/>
            <person name="Omura Y."/>
            <person name="Abe K."/>
            <person name="Kamihara K."/>
            <person name="Katsuta N."/>
            <person name="Sato K."/>
            <person name="Tanikawa M."/>
            <person name="Yamazaki M."/>
            <person name="Ninomiya K."/>
            <person name="Ishibashi T."/>
            <person name="Yamashita H."/>
            <person name="Murakawa K."/>
            <person name="Fujimori K."/>
            <person name="Tanai H."/>
            <person name="Kimata M."/>
            <person name="Watanabe M."/>
            <person name="Hiraoka S."/>
            <person name="Chiba Y."/>
            <person name="Ishida S."/>
            <person name="Ono Y."/>
            <person name="Takiguchi S."/>
            <person name="Watanabe S."/>
            <person name="Yosida M."/>
            <person name="Hotuta T."/>
            <person name="Kusano J."/>
            <person name="Kanehori K."/>
            <person name="Takahashi-Fujii A."/>
            <person name="Hara H."/>
            <person name="Tanase T.-O."/>
            <person name="Nomura Y."/>
            <person name="Togiya S."/>
            <person name="Komai F."/>
            <person name="Hara R."/>
            <person name="Takeuchi K."/>
            <person name="Arita M."/>
            <person name="Imose N."/>
            <person name="Musashino K."/>
            <person name="Yuuki H."/>
            <person name="Oshima A."/>
            <person name="Sasaki N."/>
            <person name="Aotsuka S."/>
            <person name="Yoshikawa Y."/>
            <person name="Matsunawa H."/>
            <person name="Ichihara T."/>
            <person name="Shiohata N."/>
            <person name="Sano S."/>
            <person name="Moriya S."/>
            <person name="Momiyama H."/>
            <person name="Satoh N."/>
            <person name="Takami S."/>
            <person name="Terashima Y."/>
            <person name="Suzuki O."/>
            <person name="Nakagawa S."/>
            <person name="Senoh A."/>
            <person name="Mizoguchi H."/>
            <person name="Goto Y."/>
            <person name="Shimizu F."/>
            <person name="Wakebe H."/>
            <person name="Hishigaki H."/>
            <person name="Watanabe T."/>
            <person name="Sugiyama A."/>
            <person name="Takemoto M."/>
            <person name="Kawakami B."/>
            <person name="Yamazaki M."/>
            <person name="Watanabe K."/>
            <person name="Kumagai A."/>
            <person name="Itakura S."/>
            <person name="Fukuzumi Y."/>
            <person name="Fujimori Y."/>
            <person name="Komiyama M."/>
            <person name="Tashiro H."/>
            <person name="Tanigami A."/>
            <person name="Fujiwara T."/>
            <person name="Ono T."/>
            <person name="Yamada K."/>
            <person name="Fujii Y."/>
            <person name="Ozaki K."/>
            <person name="Hirao M."/>
            <person name="Ohmori Y."/>
            <person name="Kawabata A."/>
            <person name="Hikiji T."/>
            <person name="Kobatake N."/>
            <person name="Inagaki H."/>
            <person name="Ikema Y."/>
            <person name="Okamoto S."/>
            <person name="Okitani R."/>
            <person name="Kawakami T."/>
            <person name="Noguchi S."/>
            <person name="Itoh T."/>
            <person name="Shigeta K."/>
            <person name="Senba T."/>
            <person name="Matsumura K."/>
            <person name="Nakajima Y."/>
            <person name="Mizuno T."/>
            <person name="Morinaga M."/>
            <person name="Sasaki M."/>
            <person name="Togashi T."/>
            <person name="Oyama M."/>
            <person name="Hata H."/>
            <person name="Watanabe M."/>
            <person name="Komatsu T."/>
            <person name="Mizushima-Sugano J."/>
            <person name="Satoh T."/>
            <person name="Shirai Y."/>
            <person name="Takahashi Y."/>
            <person name="Nakagawa K."/>
            <person name="Okumura K."/>
            <person name="Nagase T."/>
            <person name="Nomura N."/>
            <person name="Kikuchi H."/>
            <person name="Masuho Y."/>
            <person name="Yamashita R."/>
            <person name="Nakai K."/>
            <person name="Yada T."/>
            <person name="Nakamura Y."/>
            <person name="Ohara O."/>
            <person name="Isogai T."/>
            <person name="Sugano S."/>
        </authorList>
    </citation>
    <scope>NUCLEOTIDE SEQUENCE [LARGE SCALE MRNA]</scope>
    <source>
        <tissue>Trachea</tissue>
    </source>
</reference>
<reference key="2">
    <citation type="journal article" date="2006" name="J. Cell Sci.">
        <title>Characterization of erasin (UBXD2): a new ER protein that promotes ER-associated protein degradation.</title>
        <authorList>
            <person name="Liang J."/>
            <person name="Yin C."/>
            <person name="Doong H."/>
            <person name="Fang S."/>
            <person name="Peterhoff C."/>
            <person name="Nixon R.A."/>
            <person name="Monteiro M.J."/>
        </authorList>
    </citation>
    <scope>NUCLEOTIDE SEQUENCE [MRNA]</scope>
    <scope>FUNCTION</scope>
    <scope>SUBCELLULAR LOCATION</scope>
    <scope>INTERACTION WITH VCP</scope>
    <scope>TISSUE SPECIFICITY</scope>
    <scope>INDUCTION</scope>
    <scope>DOMAIN UBX AND INTRAMEMBRANE DOMAIN</scope>
</reference>
<reference key="3">
    <citation type="journal article" date="1996" name="DNA Res.">
        <title>Prediction of the coding sequences of unidentified human genes. VI. The coding sequences of 80 new genes (KIAA0201-KIAA0280) deduced by analysis of cDNA clones from cell line KG-1 and brain.</title>
        <authorList>
            <person name="Nagase T."/>
            <person name="Seki N."/>
            <person name="Ishikawa K."/>
            <person name="Ohira M."/>
            <person name="Kawarabayasi Y."/>
            <person name="Ohara O."/>
            <person name="Tanaka A."/>
            <person name="Kotani H."/>
            <person name="Miyajima N."/>
            <person name="Nomura N."/>
        </authorList>
    </citation>
    <scope>NUCLEOTIDE SEQUENCE [LARGE SCALE MRNA]</scope>
    <source>
        <tissue>Bone marrow</tissue>
    </source>
</reference>
<reference key="4">
    <citation type="journal article" date="2007" name="BMC Genomics">
        <title>The full-ORF clone resource of the German cDNA consortium.</title>
        <authorList>
            <person name="Bechtel S."/>
            <person name="Rosenfelder H."/>
            <person name="Duda A."/>
            <person name="Schmidt C.P."/>
            <person name="Ernst U."/>
            <person name="Wellenreuther R."/>
            <person name="Mehrle A."/>
            <person name="Schuster C."/>
            <person name="Bahr A."/>
            <person name="Bloecker H."/>
            <person name="Heubner D."/>
            <person name="Hoerlein A."/>
            <person name="Michel G."/>
            <person name="Wedler H."/>
            <person name="Koehrer K."/>
            <person name="Ottenwaelder B."/>
            <person name="Poustka A."/>
            <person name="Wiemann S."/>
            <person name="Schupp I."/>
        </authorList>
    </citation>
    <scope>NUCLEOTIDE SEQUENCE [LARGE SCALE MRNA]</scope>
    <source>
        <tissue>Fetal skin</tissue>
    </source>
</reference>
<reference key="5">
    <citation type="journal article" date="2005" name="Nature">
        <title>Generation and annotation of the DNA sequences of human chromosomes 2 and 4.</title>
        <authorList>
            <person name="Hillier L.W."/>
            <person name="Graves T.A."/>
            <person name="Fulton R.S."/>
            <person name="Fulton L.A."/>
            <person name="Pepin K.H."/>
            <person name="Minx P."/>
            <person name="Wagner-McPherson C."/>
            <person name="Layman D."/>
            <person name="Wylie K."/>
            <person name="Sekhon M."/>
            <person name="Becker M.C."/>
            <person name="Fewell G.A."/>
            <person name="Delehaunty K.D."/>
            <person name="Miner T.L."/>
            <person name="Nash W.E."/>
            <person name="Kremitzki C."/>
            <person name="Oddy L."/>
            <person name="Du H."/>
            <person name="Sun H."/>
            <person name="Bradshaw-Cordum H."/>
            <person name="Ali J."/>
            <person name="Carter J."/>
            <person name="Cordes M."/>
            <person name="Harris A."/>
            <person name="Isak A."/>
            <person name="van Brunt A."/>
            <person name="Nguyen C."/>
            <person name="Du F."/>
            <person name="Courtney L."/>
            <person name="Kalicki J."/>
            <person name="Ozersky P."/>
            <person name="Abbott S."/>
            <person name="Armstrong J."/>
            <person name="Belter E.A."/>
            <person name="Caruso L."/>
            <person name="Cedroni M."/>
            <person name="Cotton M."/>
            <person name="Davidson T."/>
            <person name="Desai A."/>
            <person name="Elliott G."/>
            <person name="Erb T."/>
            <person name="Fronick C."/>
            <person name="Gaige T."/>
            <person name="Haakenson W."/>
            <person name="Haglund K."/>
            <person name="Holmes A."/>
            <person name="Harkins R."/>
            <person name="Kim K."/>
            <person name="Kruchowski S.S."/>
            <person name="Strong C.M."/>
            <person name="Grewal N."/>
            <person name="Goyea E."/>
            <person name="Hou S."/>
            <person name="Levy A."/>
            <person name="Martinka S."/>
            <person name="Mead K."/>
            <person name="McLellan M.D."/>
            <person name="Meyer R."/>
            <person name="Randall-Maher J."/>
            <person name="Tomlinson C."/>
            <person name="Dauphin-Kohlberg S."/>
            <person name="Kozlowicz-Reilly A."/>
            <person name="Shah N."/>
            <person name="Swearengen-Shahid S."/>
            <person name="Snider J."/>
            <person name="Strong J.T."/>
            <person name="Thompson J."/>
            <person name="Yoakum M."/>
            <person name="Leonard S."/>
            <person name="Pearman C."/>
            <person name="Trani L."/>
            <person name="Radionenko M."/>
            <person name="Waligorski J.E."/>
            <person name="Wang C."/>
            <person name="Rock S.M."/>
            <person name="Tin-Wollam A.-M."/>
            <person name="Maupin R."/>
            <person name="Latreille P."/>
            <person name="Wendl M.C."/>
            <person name="Yang S.-P."/>
            <person name="Pohl C."/>
            <person name="Wallis J.W."/>
            <person name="Spieth J."/>
            <person name="Bieri T.A."/>
            <person name="Berkowicz N."/>
            <person name="Nelson J.O."/>
            <person name="Osborne J."/>
            <person name="Ding L."/>
            <person name="Meyer R."/>
            <person name="Sabo A."/>
            <person name="Shotland Y."/>
            <person name="Sinha P."/>
            <person name="Wohldmann P.E."/>
            <person name="Cook L.L."/>
            <person name="Hickenbotham M.T."/>
            <person name="Eldred J."/>
            <person name="Williams D."/>
            <person name="Jones T.A."/>
            <person name="She X."/>
            <person name="Ciccarelli F.D."/>
            <person name="Izaurralde E."/>
            <person name="Taylor J."/>
            <person name="Schmutz J."/>
            <person name="Myers R.M."/>
            <person name="Cox D.R."/>
            <person name="Huang X."/>
            <person name="McPherson J.D."/>
            <person name="Mardis E.R."/>
            <person name="Clifton S.W."/>
            <person name="Warren W.C."/>
            <person name="Chinwalla A.T."/>
            <person name="Eddy S.R."/>
            <person name="Marra M.A."/>
            <person name="Ovcharenko I."/>
            <person name="Furey T.S."/>
            <person name="Miller W."/>
            <person name="Eichler E.E."/>
            <person name="Bork P."/>
            <person name="Suyama M."/>
            <person name="Torrents D."/>
            <person name="Waterston R.H."/>
            <person name="Wilson R.K."/>
        </authorList>
    </citation>
    <scope>NUCLEOTIDE SEQUENCE [LARGE SCALE GENOMIC DNA]</scope>
</reference>
<reference key="6">
    <citation type="submission" date="2005-09" db="EMBL/GenBank/DDBJ databases">
        <authorList>
            <person name="Mural R.J."/>
            <person name="Istrail S."/>
            <person name="Sutton G.G."/>
            <person name="Florea L."/>
            <person name="Halpern A.L."/>
            <person name="Mobarry C.M."/>
            <person name="Lippert R."/>
            <person name="Walenz B."/>
            <person name="Shatkay H."/>
            <person name="Dew I."/>
            <person name="Miller J.R."/>
            <person name="Flanigan M.J."/>
            <person name="Edwards N.J."/>
            <person name="Bolanos R."/>
            <person name="Fasulo D."/>
            <person name="Halldorsson B.V."/>
            <person name="Hannenhalli S."/>
            <person name="Turner R."/>
            <person name="Yooseph S."/>
            <person name="Lu F."/>
            <person name="Nusskern D.R."/>
            <person name="Shue B.C."/>
            <person name="Zheng X.H."/>
            <person name="Zhong F."/>
            <person name="Delcher A.L."/>
            <person name="Huson D.H."/>
            <person name="Kravitz S.A."/>
            <person name="Mouchard L."/>
            <person name="Reinert K."/>
            <person name="Remington K.A."/>
            <person name="Clark A.G."/>
            <person name="Waterman M.S."/>
            <person name="Eichler E.E."/>
            <person name="Adams M.D."/>
            <person name="Hunkapiller M.W."/>
            <person name="Myers E.W."/>
            <person name="Venter J.C."/>
        </authorList>
    </citation>
    <scope>NUCLEOTIDE SEQUENCE [LARGE SCALE GENOMIC DNA]</scope>
</reference>
<reference key="7">
    <citation type="journal article" date="2004" name="Genome Res.">
        <title>The status, quality, and expansion of the NIH full-length cDNA project: the Mammalian Gene Collection (MGC).</title>
        <authorList>
            <consortium name="The MGC Project Team"/>
        </authorList>
    </citation>
    <scope>NUCLEOTIDE SEQUENCE [LARGE SCALE MRNA]</scope>
    <source>
        <tissue>Eye</tissue>
    </source>
</reference>
<reference key="8">
    <citation type="journal article" date="2007" name="Science">
        <title>ATM and ATR substrate analysis reveals extensive protein networks responsive to DNA damage.</title>
        <authorList>
            <person name="Matsuoka S."/>
            <person name="Ballif B.A."/>
            <person name="Smogorzewska A."/>
            <person name="McDonald E.R. III"/>
            <person name="Hurov K.E."/>
            <person name="Luo J."/>
            <person name="Bakalarski C.E."/>
            <person name="Zhao Z."/>
            <person name="Solimini N."/>
            <person name="Lerenthal Y."/>
            <person name="Shiloh Y."/>
            <person name="Gygi S.P."/>
            <person name="Elledge S.J."/>
        </authorList>
    </citation>
    <scope>PHOSPHORYLATION [LARGE SCALE ANALYSIS] AT THR-489</scope>
    <scope>IDENTIFICATION BY MASS SPECTROMETRY [LARGE SCALE ANALYSIS]</scope>
    <source>
        <tissue>Embryonic kidney</tissue>
    </source>
</reference>
<reference key="9">
    <citation type="journal article" date="2009" name="J. Cell Biol.">
        <title>Ubiquilin and p97/VCP bind erasin, forming a complex involved in ERAD.</title>
        <authorList>
            <person name="Lim P.J."/>
            <person name="Danner R."/>
            <person name="Liang J."/>
            <person name="Doong H."/>
            <person name="Harman C."/>
            <person name="Srinivasan D."/>
            <person name="Rothenberg C."/>
            <person name="Wang H."/>
            <person name="Ye Y."/>
            <person name="Fang S."/>
            <person name="Monteiro M.J."/>
        </authorList>
    </citation>
    <scope>FUNCTION</scope>
    <scope>INTERACTION WITH UBQLN1 AND VCP</scope>
</reference>
<reference key="10">
    <citation type="journal article" date="2011" name="BMC Syst. Biol.">
        <title>Initial characterization of the human central proteome.</title>
        <authorList>
            <person name="Burkard T.R."/>
            <person name="Planyavsky M."/>
            <person name="Kaupe I."/>
            <person name="Breitwieser F.P."/>
            <person name="Buerckstuemmer T."/>
            <person name="Bennett K.L."/>
            <person name="Superti-Furga G."/>
            <person name="Colinge J."/>
        </authorList>
    </citation>
    <scope>IDENTIFICATION BY MASS SPECTROMETRY [LARGE SCALE ANALYSIS]</scope>
</reference>
<reference key="11">
    <citation type="journal article" date="2013" name="J. Proteome Res.">
        <title>Toward a comprehensive characterization of a human cancer cell phosphoproteome.</title>
        <authorList>
            <person name="Zhou H."/>
            <person name="Di Palma S."/>
            <person name="Preisinger C."/>
            <person name="Peng M."/>
            <person name="Polat A.N."/>
            <person name="Heck A.J."/>
            <person name="Mohammed S."/>
        </authorList>
    </citation>
    <scope>PHOSPHORYLATION [LARGE SCALE ANALYSIS] AT THR-489</scope>
    <scope>IDENTIFICATION BY MASS SPECTROMETRY [LARGE SCALE ANALYSIS]</scope>
    <source>
        <tissue>Cervix carcinoma</tissue>
        <tissue>Erythroleukemia</tissue>
    </source>
</reference>
<reference key="12">
    <citation type="journal article" date="2014" name="J. Proteomics">
        <title>An enzyme assisted RP-RPLC approach for in-depth analysis of human liver phosphoproteome.</title>
        <authorList>
            <person name="Bian Y."/>
            <person name="Song C."/>
            <person name="Cheng K."/>
            <person name="Dong M."/>
            <person name="Wang F."/>
            <person name="Huang J."/>
            <person name="Sun D."/>
            <person name="Wang L."/>
            <person name="Ye M."/>
            <person name="Zou H."/>
        </authorList>
    </citation>
    <scope>IDENTIFICATION BY MASS SPECTROMETRY [LARGE SCALE ANALYSIS]</scope>
    <source>
        <tissue>Liver</tissue>
    </source>
</reference>
<reference key="13">
    <citation type="journal article" date="2015" name="Proteomics">
        <title>N-terminome analysis of the human mitochondrial proteome.</title>
        <authorList>
            <person name="Vaca Jacome A.S."/>
            <person name="Rabilloud T."/>
            <person name="Schaeffer-Reiss C."/>
            <person name="Rompais M."/>
            <person name="Ayoub D."/>
            <person name="Lane L."/>
            <person name="Bairoch A."/>
            <person name="Van Dorsselaer A."/>
            <person name="Carapito C."/>
        </authorList>
    </citation>
    <scope>IDENTIFICATION BY MASS SPECTROMETRY [LARGE SCALE ANALYSIS]</scope>
</reference>
<reference key="14">
    <citation type="submission" date="2011-05" db="PDB data bank">
        <title>Solution structure of UBX domain of human UBXD2 protein.</title>
        <authorList>
            <person name="Wu Q."/>
            <person name="Huang H."/>
            <person name="Zhang J."/>
            <person name="Hu Q."/>
            <person name="Wu J."/>
            <person name="Shi Y."/>
        </authorList>
    </citation>
    <scope>STRUCTURE BY NMR OF 317-397</scope>
</reference>
<proteinExistence type="evidence at protein level"/>